<sequence>MRRPAILAAAVLLAPLAACSTVKEAVKGPDLAPVGYPAPLAPMQQQYVSAREPAPQAASANSLWRVGARAFFNDQRASRVGDIVTVMIDIDDSASTKNATNSSRTANMKAGVPHLLGMESSLGKFLPGGFDPASALETNSTTTNAGSGGVSRSEKISLTIAAVVSQVLPNGNMVIQGTQEVRTNAELRQLTVAGIVRPEDISSANTIRHTQIAEARISYGGRGDISRVQKTPAGQSLVEKFSPF</sequence>
<proteinExistence type="inferred from homology"/>
<dbReference type="EMBL" id="M37270">
    <property type="protein sequence ID" value="AAA23035.1"/>
    <property type="molecule type" value="Genomic_DNA"/>
</dbReference>
<dbReference type="EMBL" id="AE005673">
    <property type="protein sequence ID" value="AAK24037.1"/>
    <property type="molecule type" value="Genomic_DNA"/>
</dbReference>
<dbReference type="PIR" id="A36148">
    <property type="entry name" value="A36148"/>
</dbReference>
<dbReference type="PIR" id="A87505">
    <property type="entry name" value="A87505"/>
</dbReference>
<dbReference type="RefSeq" id="NP_420869.1">
    <property type="nucleotide sequence ID" value="NC_002696.2"/>
</dbReference>
<dbReference type="RefSeq" id="WP_010919927.1">
    <property type="nucleotide sequence ID" value="NC_002696.2"/>
</dbReference>
<dbReference type="SMR" id="P22606"/>
<dbReference type="STRING" id="190650.CC_2066"/>
<dbReference type="EnsemblBacteria" id="AAK24037">
    <property type="protein sequence ID" value="AAK24037"/>
    <property type="gene ID" value="CC_2066"/>
</dbReference>
<dbReference type="KEGG" id="ccr:CC_2066"/>
<dbReference type="PATRIC" id="fig|190650.5.peg.2085"/>
<dbReference type="eggNOG" id="COG2063">
    <property type="taxonomic scope" value="Bacteria"/>
</dbReference>
<dbReference type="HOGENOM" id="CLU_069313_1_2_5"/>
<dbReference type="BioCyc" id="CAULO:CC2066-MONOMER"/>
<dbReference type="Proteomes" id="UP000001816">
    <property type="component" value="Chromosome"/>
</dbReference>
<dbReference type="GO" id="GO:0009427">
    <property type="term" value="C:bacterial-type flagellum basal body, distal rod, L ring"/>
    <property type="evidence" value="ECO:0007669"/>
    <property type="project" value="InterPro"/>
</dbReference>
<dbReference type="GO" id="GO:0009279">
    <property type="term" value="C:cell outer membrane"/>
    <property type="evidence" value="ECO:0007669"/>
    <property type="project" value="UniProtKB-SubCell"/>
</dbReference>
<dbReference type="GO" id="GO:0003774">
    <property type="term" value="F:cytoskeletal motor activity"/>
    <property type="evidence" value="ECO:0007669"/>
    <property type="project" value="InterPro"/>
</dbReference>
<dbReference type="GO" id="GO:0071973">
    <property type="term" value="P:bacterial-type flagellum-dependent cell motility"/>
    <property type="evidence" value="ECO:0007669"/>
    <property type="project" value="InterPro"/>
</dbReference>
<dbReference type="HAMAP" id="MF_00415">
    <property type="entry name" value="FlgH"/>
    <property type="match status" value="1"/>
</dbReference>
<dbReference type="InterPro" id="IPR000527">
    <property type="entry name" value="Flag_Lring"/>
</dbReference>
<dbReference type="NCBIfam" id="NF001305">
    <property type="entry name" value="PRK00249.1-5"/>
    <property type="match status" value="1"/>
</dbReference>
<dbReference type="PANTHER" id="PTHR34933">
    <property type="entry name" value="FLAGELLAR L-RING PROTEIN"/>
    <property type="match status" value="1"/>
</dbReference>
<dbReference type="PANTHER" id="PTHR34933:SF1">
    <property type="entry name" value="FLAGELLAR L-RING PROTEIN"/>
    <property type="match status" value="1"/>
</dbReference>
<dbReference type="Pfam" id="PF02107">
    <property type="entry name" value="FlgH"/>
    <property type="match status" value="1"/>
</dbReference>
<dbReference type="PRINTS" id="PR01008">
    <property type="entry name" value="FLGLRINGFLGH"/>
</dbReference>
<comment type="function">
    <text>Assembles around the rod to form the L-ring and probably protects the motor/basal body from shearing forces during rotation.</text>
</comment>
<comment type="subunit">
    <text>The basal body constitutes a major portion of the flagellar organelle and consists of five rings (E,L,P,S, and M) mounted on a central rod.</text>
</comment>
<comment type="subcellular location">
    <subcellularLocation>
        <location evidence="1">Cell outer membrane</location>
        <topology evidence="1">Lipid-anchor</topology>
    </subcellularLocation>
    <subcellularLocation>
        <location evidence="1">Bacterial flagellum basal body</location>
    </subcellularLocation>
</comment>
<comment type="similarity">
    <text evidence="3">Belongs to the FlgH family.</text>
</comment>
<protein>
    <recommendedName>
        <fullName>Flagellar L-ring protein</fullName>
    </recommendedName>
    <alternativeName>
        <fullName>Basal body L-ring protein</fullName>
    </alternativeName>
</protein>
<name>FLGH_CAUVC</name>
<feature type="signal peptide" evidence="2">
    <location>
        <begin position="1"/>
        <end position="18"/>
    </location>
</feature>
<feature type="chain" id="PRO_0000009438" description="Flagellar L-ring protein">
    <location>
        <begin position="19"/>
        <end position="244"/>
    </location>
</feature>
<feature type="lipid moiety-binding region" description="N-palmitoyl cysteine" evidence="2">
    <location>
        <position position="19"/>
    </location>
</feature>
<feature type="lipid moiety-binding region" description="S-diacylglycerol cysteine" evidence="2">
    <location>
        <position position="19"/>
    </location>
</feature>
<feature type="sequence conflict" description="In Ref. 1." evidence="3" ref="1">
    <original>AASANSLWRVGAR</original>
    <variation>RFGQLAVAGRGP</variation>
    <location>
        <begin position="57"/>
        <end position="69"/>
    </location>
</feature>
<feature type="sequence conflict" description="In Ref. 1; AAA23035." evidence="3" ref="1">
    <original>S</original>
    <variation>R</variation>
    <location>
        <position position="95"/>
    </location>
</feature>
<feature type="sequence conflict" description="In Ref. 1; AAA23035." evidence="3" ref="1">
    <original>NA</original>
    <variation>KP</variation>
    <location>
        <begin position="98"/>
        <end position="99"/>
    </location>
</feature>
<feature type="sequence conflict" description="In Ref. 1; AAA23035." evidence="3" ref="1">
    <original>P</original>
    <variation>R</variation>
    <location>
        <position position="113"/>
    </location>
</feature>
<feature type="sequence conflict" description="In Ref. 1; AAA23035." evidence="3" ref="1">
    <location>
        <position position="150"/>
    </location>
</feature>
<feature type="sequence conflict" description="In Ref. 1; AAA23035." evidence="3" ref="1">
    <original>V</original>
    <variation>L</variation>
    <location>
        <position position="167"/>
    </location>
</feature>
<evidence type="ECO:0000250" key="1"/>
<evidence type="ECO:0000255" key="2"/>
<evidence type="ECO:0000305" key="3"/>
<organism>
    <name type="scientific">Caulobacter vibrioides (strain ATCC 19089 / CIP 103742 / CB 15)</name>
    <name type="common">Caulobacter crescentus</name>
    <dbReference type="NCBI Taxonomy" id="190650"/>
    <lineage>
        <taxon>Bacteria</taxon>
        <taxon>Pseudomonadati</taxon>
        <taxon>Pseudomonadota</taxon>
        <taxon>Alphaproteobacteria</taxon>
        <taxon>Caulobacterales</taxon>
        <taxon>Caulobacteraceae</taxon>
        <taxon>Caulobacter</taxon>
    </lineage>
</organism>
<accession>P22606</accession>
<reference key="1">
    <citation type="journal article" date="1990" name="J. Bacteriol.">
        <title>Identification of a Caulobacter basal body structural gene and a cis-acting site required for activation of transcription.</title>
        <authorList>
            <person name="Dingwall A."/>
            <person name="Gober J.W."/>
            <person name="Shapiro L."/>
        </authorList>
    </citation>
    <scope>NUCLEOTIDE SEQUENCE [GENOMIC DNA]</scope>
    <source>
        <strain>ATCC 19089 / CIP 103742 / CB 15</strain>
    </source>
</reference>
<reference key="2">
    <citation type="journal article" date="2001" name="Proc. Natl. Acad. Sci. U.S.A.">
        <title>Complete genome sequence of Caulobacter crescentus.</title>
        <authorList>
            <person name="Nierman W.C."/>
            <person name="Feldblyum T.V."/>
            <person name="Laub M.T."/>
            <person name="Paulsen I.T."/>
            <person name="Nelson K.E."/>
            <person name="Eisen J.A."/>
            <person name="Heidelberg J.F."/>
            <person name="Alley M.R.K."/>
            <person name="Ohta N."/>
            <person name="Maddock J.R."/>
            <person name="Potocka I."/>
            <person name="Nelson W.C."/>
            <person name="Newton A."/>
            <person name="Stephens C."/>
            <person name="Phadke N.D."/>
            <person name="Ely B."/>
            <person name="DeBoy R.T."/>
            <person name="Dodson R.J."/>
            <person name="Durkin A.S."/>
            <person name="Gwinn M.L."/>
            <person name="Haft D.H."/>
            <person name="Kolonay J.F."/>
            <person name="Smit J."/>
            <person name="Craven M.B."/>
            <person name="Khouri H.M."/>
            <person name="Shetty J."/>
            <person name="Berry K.J."/>
            <person name="Utterback T.R."/>
            <person name="Tran K."/>
            <person name="Wolf A.M."/>
            <person name="Vamathevan J.J."/>
            <person name="Ermolaeva M.D."/>
            <person name="White O."/>
            <person name="Salzberg S.L."/>
            <person name="Venter J.C."/>
            <person name="Shapiro L."/>
            <person name="Fraser C.M."/>
        </authorList>
    </citation>
    <scope>NUCLEOTIDE SEQUENCE [LARGE SCALE GENOMIC DNA]</scope>
    <source>
        <strain>ATCC 19089 / CIP 103742 / CB 15</strain>
    </source>
</reference>
<keyword id="KW-0975">Bacterial flagellum</keyword>
<keyword id="KW-0998">Cell outer membrane</keyword>
<keyword id="KW-0449">Lipoprotein</keyword>
<keyword id="KW-0472">Membrane</keyword>
<keyword id="KW-0564">Palmitate</keyword>
<keyword id="KW-1185">Reference proteome</keyword>
<keyword id="KW-0732">Signal</keyword>
<gene>
    <name type="primary">flgH</name>
    <name type="synonym">flbN</name>
    <name type="ordered locus">CC_2066</name>
</gene>